<organism>
    <name type="scientific">Bacillus subtilis (strain 168)</name>
    <dbReference type="NCBI Taxonomy" id="224308"/>
    <lineage>
        <taxon>Bacteria</taxon>
        <taxon>Bacillati</taxon>
        <taxon>Bacillota</taxon>
        <taxon>Bacilli</taxon>
        <taxon>Bacillales</taxon>
        <taxon>Bacillaceae</taxon>
        <taxon>Bacillus</taxon>
    </lineage>
</organism>
<keyword id="KW-0119">Carbohydrate metabolism</keyword>
<keyword id="KW-1003">Cell membrane</keyword>
<keyword id="KW-0326">Glycosidase</keyword>
<keyword id="KW-0378">Hydrolase</keyword>
<keyword id="KW-0472">Membrane</keyword>
<keyword id="KW-1185">Reference proteome</keyword>
<keyword id="KW-0812">Transmembrane</keyword>
<keyword id="KW-1133">Transmembrane helix</keyword>
<protein>
    <recommendedName>
        <fullName>Levanbiose-producing levanase</fullName>
        <ecNumber>3.2.1.64</ecNumber>
    </recommendedName>
    <alternativeName>
        <fullName>2,6-beta-fructan 6-levanbiohydrolase</fullName>
    </alternativeName>
    <alternativeName>
        <fullName>Endo-levanase</fullName>
    </alternativeName>
</protein>
<evidence type="ECO:0000250" key="1"/>
<evidence type="ECO:0000255" key="2"/>
<evidence type="ECO:0000269" key="3">
    <source>
    </source>
</evidence>
<evidence type="ECO:0000269" key="4">
    <source>
    </source>
</evidence>
<evidence type="ECO:0000305" key="5"/>
<sequence>MNYIKAGKWLTVFLTFLGILLFIDLFPKEEHDQKTKSKQKPDYRAAYHFTTPDKWKNDPQKPIYFDGKYHYFYLYNRDYPKGNGTEWRHAVSEDLVHWTDEGVAIPKYTNPDGDIWTGSVVVDKENTAGFGKNALVAIVTQPSAKDKKQEQYLWYSTDKGKSFKFYSGNPVMPNPGTDDFRDPKVIWDDQDNKWVMVMAEGSKIGFYESDNLKDWHYTSGFFPEQAGMVECPDLYMMRASDGTNKWVLGASANGKPWGKPNTYAYWTGSFDGKEFKADQTEAQWLDYGFDWYGGVTFEDSKSTDPLEKRYALAWMNNWDYANNTPTMKNGFNGTDSVIRELRLKEQDGTYSLVSQPIEALEQLTVSTDEIEDQDVNGSKTLSITGDTYQLDTDLSWSELKNAGVRLRESEDQKRHIDVGIFAEGGYAYVNRAATNQPDKSNTYVESKAPYDVNKRKVHLKILVDKTTIEVFVGDGKTVFSNEVFPKPEDKGITLYSDGGTASFKNITVKHFDSIHE</sequence>
<feature type="chain" id="PRO_0000344254" description="Levanbiose-producing levanase">
    <location>
        <begin position="1"/>
        <end position="516"/>
    </location>
</feature>
<feature type="topological domain" description="Cytoplasmic" evidence="2">
    <location>
        <begin position="1"/>
        <end position="5"/>
    </location>
</feature>
<feature type="transmembrane region" description="Helical" evidence="2">
    <location>
        <begin position="6"/>
        <end position="26"/>
    </location>
</feature>
<feature type="topological domain" description="Extracellular" evidence="2">
    <location>
        <begin position="27"/>
        <end position="516"/>
    </location>
</feature>
<feature type="active site" evidence="1">
    <location>
        <position position="58"/>
    </location>
</feature>
<feature type="binding site" evidence="1">
    <location>
        <begin position="55"/>
        <end position="58"/>
    </location>
    <ligand>
        <name>substrate</name>
    </ligand>
</feature>
<feature type="binding site" evidence="1">
    <location>
        <begin position="116"/>
        <end position="117"/>
    </location>
    <ligand>
        <name>substrate</name>
    </ligand>
</feature>
<feature type="binding site" evidence="1">
    <location>
        <begin position="181"/>
        <end position="182"/>
    </location>
    <ligand>
        <name>substrate</name>
    </ligand>
</feature>
<feature type="binding site" evidence="1">
    <location>
        <position position="230"/>
    </location>
    <ligand>
        <name>substrate</name>
    </ligand>
</feature>
<feature type="binding site" evidence="1">
    <location>
        <position position="318"/>
    </location>
    <ligand>
        <name>substrate</name>
    </ligand>
</feature>
<accession>O07003</accession>
<accession>Q795H7</accession>
<proteinExistence type="evidence at protein level"/>
<reference key="1">
    <citation type="submission" date="1997-04" db="EMBL/GenBank/DDBJ databases">
        <authorList>
            <person name="Denizot F."/>
        </authorList>
    </citation>
    <scope>NUCLEOTIDE SEQUENCE [GENOMIC DNA]</scope>
    <source>
        <strain>168</strain>
    </source>
</reference>
<reference key="2">
    <citation type="journal article" date="1997" name="Nature">
        <title>The complete genome sequence of the Gram-positive bacterium Bacillus subtilis.</title>
        <authorList>
            <person name="Kunst F."/>
            <person name="Ogasawara N."/>
            <person name="Moszer I."/>
            <person name="Albertini A.M."/>
            <person name="Alloni G."/>
            <person name="Azevedo V."/>
            <person name="Bertero M.G."/>
            <person name="Bessieres P."/>
            <person name="Bolotin A."/>
            <person name="Borchert S."/>
            <person name="Borriss R."/>
            <person name="Boursier L."/>
            <person name="Brans A."/>
            <person name="Braun M."/>
            <person name="Brignell S.C."/>
            <person name="Bron S."/>
            <person name="Brouillet S."/>
            <person name="Bruschi C.V."/>
            <person name="Caldwell B."/>
            <person name="Capuano V."/>
            <person name="Carter N.M."/>
            <person name="Choi S.-K."/>
            <person name="Codani J.-J."/>
            <person name="Connerton I.F."/>
            <person name="Cummings N.J."/>
            <person name="Daniel R.A."/>
            <person name="Denizot F."/>
            <person name="Devine K.M."/>
            <person name="Duesterhoeft A."/>
            <person name="Ehrlich S.D."/>
            <person name="Emmerson P.T."/>
            <person name="Entian K.-D."/>
            <person name="Errington J."/>
            <person name="Fabret C."/>
            <person name="Ferrari E."/>
            <person name="Foulger D."/>
            <person name="Fritz C."/>
            <person name="Fujita M."/>
            <person name="Fujita Y."/>
            <person name="Fuma S."/>
            <person name="Galizzi A."/>
            <person name="Galleron N."/>
            <person name="Ghim S.-Y."/>
            <person name="Glaser P."/>
            <person name="Goffeau A."/>
            <person name="Golightly E.J."/>
            <person name="Grandi G."/>
            <person name="Guiseppi G."/>
            <person name="Guy B.J."/>
            <person name="Haga K."/>
            <person name="Haiech J."/>
            <person name="Harwood C.R."/>
            <person name="Henaut A."/>
            <person name="Hilbert H."/>
            <person name="Holsappel S."/>
            <person name="Hosono S."/>
            <person name="Hullo M.-F."/>
            <person name="Itaya M."/>
            <person name="Jones L.-M."/>
            <person name="Joris B."/>
            <person name="Karamata D."/>
            <person name="Kasahara Y."/>
            <person name="Klaerr-Blanchard M."/>
            <person name="Klein C."/>
            <person name="Kobayashi Y."/>
            <person name="Koetter P."/>
            <person name="Koningstein G."/>
            <person name="Krogh S."/>
            <person name="Kumano M."/>
            <person name="Kurita K."/>
            <person name="Lapidus A."/>
            <person name="Lardinois S."/>
            <person name="Lauber J."/>
            <person name="Lazarevic V."/>
            <person name="Lee S.-M."/>
            <person name="Levine A."/>
            <person name="Liu H."/>
            <person name="Masuda S."/>
            <person name="Mauel C."/>
            <person name="Medigue C."/>
            <person name="Medina N."/>
            <person name="Mellado R.P."/>
            <person name="Mizuno M."/>
            <person name="Moestl D."/>
            <person name="Nakai S."/>
            <person name="Noback M."/>
            <person name="Noone D."/>
            <person name="O'Reilly M."/>
            <person name="Ogawa K."/>
            <person name="Ogiwara A."/>
            <person name="Oudega B."/>
            <person name="Park S.-H."/>
            <person name="Parro V."/>
            <person name="Pohl T.M."/>
            <person name="Portetelle D."/>
            <person name="Porwollik S."/>
            <person name="Prescott A.M."/>
            <person name="Presecan E."/>
            <person name="Pujic P."/>
            <person name="Purnelle B."/>
            <person name="Rapoport G."/>
            <person name="Rey M."/>
            <person name="Reynolds S."/>
            <person name="Rieger M."/>
            <person name="Rivolta C."/>
            <person name="Rocha E."/>
            <person name="Roche B."/>
            <person name="Rose M."/>
            <person name="Sadaie Y."/>
            <person name="Sato T."/>
            <person name="Scanlan E."/>
            <person name="Schleich S."/>
            <person name="Schroeter R."/>
            <person name="Scoffone F."/>
            <person name="Sekiguchi J."/>
            <person name="Sekowska A."/>
            <person name="Seror S.J."/>
            <person name="Serror P."/>
            <person name="Shin B.-S."/>
            <person name="Soldo B."/>
            <person name="Sorokin A."/>
            <person name="Tacconi E."/>
            <person name="Takagi T."/>
            <person name="Takahashi H."/>
            <person name="Takemaru K."/>
            <person name="Takeuchi M."/>
            <person name="Tamakoshi A."/>
            <person name="Tanaka T."/>
            <person name="Terpstra P."/>
            <person name="Tognoni A."/>
            <person name="Tosato V."/>
            <person name="Uchiyama S."/>
            <person name="Vandenbol M."/>
            <person name="Vannier F."/>
            <person name="Vassarotti A."/>
            <person name="Viari A."/>
            <person name="Wambutt R."/>
            <person name="Wedler E."/>
            <person name="Wedler H."/>
            <person name="Weitzenegger T."/>
            <person name="Winters P."/>
            <person name="Wipat A."/>
            <person name="Yamamoto H."/>
            <person name="Yamane K."/>
            <person name="Yasumoto K."/>
            <person name="Yata K."/>
            <person name="Yoshida K."/>
            <person name="Yoshikawa H.-F."/>
            <person name="Zumstein E."/>
            <person name="Yoshikawa H."/>
            <person name="Danchin A."/>
        </authorList>
    </citation>
    <scope>NUCLEOTIDE SEQUENCE [LARGE SCALE GENOMIC DNA]</scope>
    <source>
        <strain>168</strain>
    </source>
</reference>
<reference key="3">
    <citation type="journal article" date="2001" name="Microbiology">
        <title>yveB, encoding endolevanase LevB, is part of the sacB-yveB-yveA levansucrase tricistronic operon in Bacillus subtilis.</title>
        <authorList>
            <person name="Pereira Y."/>
            <person name="Petit-Glatron M.-F."/>
            <person name="Chambert R."/>
        </authorList>
    </citation>
    <scope>FUNCTION</scope>
    <scope>INDUCTION</scope>
    <scope>SUBCELLULAR LOCATION</scope>
</reference>
<reference key="4">
    <citation type="journal article" date="2004" name="Microbiology">
        <title>Autogenous modulation of the Bacillus subtilis sacB-levB-yveA levansucrase operon by the levB transcript.</title>
        <authorList>
            <person name="Daguer J.-P."/>
            <person name="Geissmann T."/>
            <person name="Petit-Glatron M.-F."/>
            <person name="Chambert R."/>
        </authorList>
    </citation>
    <scope>FUNCTION AS A LEVANBIOSE-PRODUCING LEVANASE</scope>
</reference>
<gene>
    <name type="primary">levB</name>
    <name type="synonym">yveB</name>
    <name type="ordered locus">BSU34460</name>
</gene>
<name>LEVB_BACSU</name>
<comment type="function">
    <text evidence="3 4">Catalyzes the degradation of levan mainly into levanbiose (difructose). Is not active on sucrose.</text>
</comment>
<comment type="catalytic activity">
    <reaction>
        <text>Hydrolysis of (2-&gt;6)-beta-D-fructofuranan, to remove successive disaccharide residues as levanbiose, i.e. 6-(beta-D-fructofuranosyl)-D-fructose, from the end of the chain.</text>
        <dbReference type="EC" id="3.2.1.64"/>
    </reaction>
</comment>
<comment type="subcellular location">
    <subcellularLocation>
        <location evidence="3">Cell membrane</location>
        <topology evidence="3">Single-pass membrane protein</topology>
    </subcellularLocation>
</comment>
<comment type="induction">
    <text evidence="3">Induced by sucrose.</text>
</comment>
<comment type="similarity">
    <text evidence="5">Belongs to the glycosyl hydrolase 32 family.</text>
</comment>
<dbReference type="EC" id="3.2.1.64"/>
<dbReference type="EMBL" id="Z94043">
    <property type="protein sequence ID" value="CAB08014.1"/>
    <property type="molecule type" value="Genomic_DNA"/>
</dbReference>
<dbReference type="EMBL" id="AL009126">
    <property type="protein sequence ID" value="CAB15451.1"/>
    <property type="molecule type" value="Genomic_DNA"/>
</dbReference>
<dbReference type="PIR" id="E70035">
    <property type="entry name" value="E70035"/>
</dbReference>
<dbReference type="RefSeq" id="NP_391326.1">
    <property type="nucleotide sequence ID" value="NC_000964.3"/>
</dbReference>
<dbReference type="RefSeq" id="WP_003243729.1">
    <property type="nucleotide sequence ID" value="NZ_OZ025638.1"/>
</dbReference>
<dbReference type="SMR" id="O07003"/>
<dbReference type="FunCoup" id="O07003">
    <property type="interactions" value="142"/>
</dbReference>
<dbReference type="STRING" id="224308.BSU34460"/>
<dbReference type="CAZy" id="GH32">
    <property type="family name" value="Glycoside Hydrolase Family 32"/>
</dbReference>
<dbReference type="PaxDb" id="224308-BSU34460"/>
<dbReference type="EnsemblBacteria" id="CAB15451">
    <property type="protein sequence ID" value="CAB15451"/>
    <property type="gene ID" value="BSU_34460"/>
</dbReference>
<dbReference type="GeneID" id="938616"/>
<dbReference type="KEGG" id="bsu:BSU34460"/>
<dbReference type="PATRIC" id="fig|224308.179.peg.3733"/>
<dbReference type="eggNOG" id="COG1621">
    <property type="taxonomic scope" value="Bacteria"/>
</dbReference>
<dbReference type="InParanoid" id="O07003"/>
<dbReference type="OrthoDB" id="9759709at2"/>
<dbReference type="PhylomeDB" id="O07003"/>
<dbReference type="BioCyc" id="BSUB:BSU34460-MONOMER"/>
<dbReference type="Proteomes" id="UP000001570">
    <property type="component" value="Chromosome"/>
</dbReference>
<dbReference type="GO" id="GO:0005737">
    <property type="term" value="C:cytoplasm"/>
    <property type="evidence" value="ECO:0000318"/>
    <property type="project" value="GO_Central"/>
</dbReference>
<dbReference type="GO" id="GO:0005886">
    <property type="term" value="C:plasma membrane"/>
    <property type="evidence" value="ECO:0007669"/>
    <property type="project" value="UniProtKB-SubCell"/>
</dbReference>
<dbReference type="GO" id="GO:0033912">
    <property type="term" value="F:2,6-beta-fructan 6-levanbiohydrolase activity"/>
    <property type="evidence" value="ECO:0007669"/>
    <property type="project" value="UniProtKB-EC"/>
</dbReference>
<dbReference type="GO" id="GO:0004575">
    <property type="term" value="F:sucrose alpha-glucosidase activity"/>
    <property type="evidence" value="ECO:0000318"/>
    <property type="project" value="GO_Central"/>
</dbReference>
<dbReference type="GO" id="GO:0005987">
    <property type="term" value="P:sucrose catabolic process"/>
    <property type="evidence" value="ECO:0000318"/>
    <property type="project" value="GO_Central"/>
</dbReference>
<dbReference type="CDD" id="cd18622">
    <property type="entry name" value="GH32_Inu-like"/>
    <property type="match status" value="1"/>
</dbReference>
<dbReference type="FunFam" id="2.115.10.20:FF:000003">
    <property type="entry name" value="Levanbiose-producing levanase"/>
    <property type="match status" value="1"/>
</dbReference>
<dbReference type="Gene3D" id="2.60.120.560">
    <property type="entry name" value="Exo-inulinase, domain 1"/>
    <property type="match status" value="1"/>
</dbReference>
<dbReference type="Gene3D" id="2.115.10.20">
    <property type="entry name" value="Glycosyl hydrolase domain, family 43"/>
    <property type="match status" value="1"/>
</dbReference>
<dbReference type="InterPro" id="IPR013320">
    <property type="entry name" value="ConA-like_dom_sf"/>
</dbReference>
<dbReference type="InterPro" id="IPR001362">
    <property type="entry name" value="Glyco_hydro_32"/>
</dbReference>
<dbReference type="InterPro" id="IPR013189">
    <property type="entry name" value="Glyco_hydro_32_C"/>
</dbReference>
<dbReference type="InterPro" id="IPR013148">
    <property type="entry name" value="Glyco_hydro_32_N"/>
</dbReference>
<dbReference type="InterPro" id="IPR023296">
    <property type="entry name" value="Glyco_hydro_beta-prop_sf"/>
</dbReference>
<dbReference type="PANTHER" id="PTHR42800">
    <property type="entry name" value="EXOINULINASE INUD (AFU_ORTHOLOGUE AFUA_5G00480)"/>
    <property type="match status" value="1"/>
</dbReference>
<dbReference type="PANTHER" id="PTHR42800:SF1">
    <property type="entry name" value="EXOINULINASE INUD (AFU_ORTHOLOGUE AFUA_5G00480)"/>
    <property type="match status" value="1"/>
</dbReference>
<dbReference type="Pfam" id="PF08244">
    <property type="entry name" value="Glyco_hydro_32C"/>
    <property type="match status" value="1"/>
</dbReference>
<dbReference type="Pfam" id="PF00251">
    <property type="entry name" value="Glyco_hydro_32N"/>
    <property type="match status" value="1"/>
</dbReference>
<dbReference type="SMART" id="SM00640">
    <property type="entry name" value="Glyco_32"/>
    <property type="match status" value="1"/>
</dbReference>
<dbReference type="SUPFAM" id="SSF75005">
    <property type="entry name" value="Arabinanase/levansucrase/invertase"/>
    <property type="match status" value="1"/>
</dbReference>
<dbReference type="SUPFAM" id="SSF49899">
    <property type="entry name" value="Concanavalin A-like lectins/glucanases"/>
    <property type="match status" value="1"/>
</dbReference>